<reference key="1">
    <citation type="journal article" date="2007" name="Nat. Biotechnol.">
        <title>Complete genome sequence of the erythromycin-producing bacterium Saccharopolyspora erythraea NRRL23338.</title>
        <authorList>
            <person name="Oliynyk M."/>
            <person name="Samborskyy M."/>
            <person name="Lester J.B."/>
            <person name="Mironenko T."/>
            <person name="Scott N."/>
            <person name="Dickens S."/>
            <person name="Haydock S.F."/>
            <person name="Leadlay P.F."/>
        </authorList>
    </citation>
    <scope>NUCLEOTIDE SEQUENCE [LARGE SCALE GENOMIC DNA]</scope>
    <source>
        <strain>ATCC 11635 / DSM 40517 / JCM 4748 / NBRC 13426 / NCIMB 8594 / NRRL 2338</strain>
    </source>
</reference>
<proteinExistence type="inferred from homology"/>
<organism>
    <name type="scientific">Saccharopolyspora erythraea (strain ATCC 11635 / DSM 40517 / JCM 4748 / NBRC 13426 / NCIMB 8594 / NRRL 2338)</name>
    <dbReference type="NCBI Taxonomy" id="405948"/>
    <lineage>
        <taxon>Bacteria</taxon>
        <taxon>Bacillati</taxon>
        <taxon>Actinomycetota</taxon>
        <taxon>Actinomycetes</taxon>
        <taxon>Pseudonocardiales</taxon>
        <taxon>Pseudonocardiaceae</taxon>
        <taxon>Saccharopolyspora</taxon>
    </lineage>
</organism>
<evidence type="ECO:0000255" key="1">
    <source>
        <dbReference type="HAMAP-Rule" id="MF_01197"/>
    </source>
</evidence>
<evidence type="ECO:0000256" key="2">
    <source>
        <dbReference type="SAM" id="MobiDB-lite"/>
    </source>
</evidence>
<name>SEPF_SACEN</name>
<sequence length="212" mass="23601">MSALHKLKAYFGMVPADEIDEVYDDEVAYRDRYADPDTSYDAPSDRVGGRRRVAGGVRGGFQPEAEEDGGDYGEEFREPARSRRQWAPPETPVRAPLGSDAHREQVSRLRAVTDTGSHFNLSKITTLHPRSYSEARTIGEQYRDGTPVIMNLTEMDEADAKRLVDFAAGLAFALRGSIEKVTNRVFLLSPPNVDVAAEDKRRLAEGAFFNYG</sequence>
<keyword id="KW-0131">Cell cycle</keyword>
<keyword id="KW-0132">Cell division</keyword>
<keyword id="KW-0963">Cytoplasm</keyword>
<keyword id="KW-1185">Reference proteome</keyword>
<keyword id="KW-0717">Septation</keyword>
<protein>
    <recommendedName>
        <fullName evidence="1">Cell division protein SepF</fullName>
    </recommendedName>
</protein>
<gene>
    <name evidence="1" type="primary">sepF</name>
    <name type="ordered locus">SACE_5832</name>
</gene>
<feature type="chain" id="PRO_0000334071" description="Cell division protein SepF">
    <location>
        <begin position="1"/>
        <end position="212"/>
    </location>
</feature>
<feature type="region of interest" description="Disordered" evidence="2">
    <location>
        <begin position="32"/>
        <end position="104"/>
    </location>
</feature>
<feature type="compositionally biased region" description="Acidic residues" evidence="2">
    <location>
        <begin position="64"/>
        <end position="73"/>
    </location>
</feature>
<accession>A4FLU1</accession>
<comment type="function">
    <text evidence="1">Cell division protein that is part of the divisome complex and is recruited early to the Z-ring. Probably stimulates Z-ring formation, perhaps through the cross-linking of FtsZ protofilaments. Its function overlaps with FtsA.</text>
</comment>
<comment type="subunit">
    <text evidence="1">Homodimer. Interacts with FtsZ.</text>
</comment>
<comment type="subcellular location">
    <subcellularLocation>
        <location evidence="1">Cytoplasm</location>
    </subcellularLocation>
    <text evidence="1">Localizes to the division site, in a FtsZ-dependent manner.</text>
</comment>
<comment type="similarity">
    <text evidence="1">Belongs to the SepF family.</text>
</comment>
<dbReference type="EMBL" id="AM420293">
    <property type="protein sequence ID" value="CAM05016.1"/>
    <property type="molecule type" value="Genomic_DNA"/>
</dbReference>
<dbReference type="RefSeq" id="WP_011874852.1">
    <property type="nucleotide sequence ID" value="NC_009142.1"/>
</dbReference>
<dbReference type="SMR" id="A4FLU1"/>
<dbReference type="STRING" id="405948.SACE_5832"/>
<dbReference type="KEGG" id="sen:SACE_5832"/>
<dbReference type="eggNOG" id="COG1799">
    <property type="taxonomic scope" value="Bacteria"/>
</dbReference>
<dbReference type="HOGENOM" id="CLU_078499_0_0_11"/>
<dbReference type="OrthoDB" id="3731101at2"/>
<dbReference type="Proteomes" id="UP000006728">
    <property type="component" value="Chromosome"/>
</dbReference>
<dbReference type="GO" id="GO:0005737">
    <property type="term" value="C:cytoplasm"/>
    <property type="evidence" value="ECO:0007669"/>
    <property type="project" value="UniProtKB-SubCell"/>
</dbReference>
<dbReference type="GO" id="GO:0000917">
    <property type="term" value="P:division septum assembly"/>
    <property type="evidence" value="ECO:0007669"/>
    <property type="project" value="UniProtKB-KW"/>
</dbReference>
<dbReference type="GO" id="GO:0043093">
    <property type="term" value="P:FtsZ-dependent cytokinesis"/>
    <property type="evidence" value="ECO:0007669"/>
    <property type="project" value="UniProtKB-UniRule"/>
</dbReference>
<dbReference type="Gene3D" id="3.30.110.150">
    <property type="entry name" value="SepF-like protein"/>
    <property type="match status" value="1"/>
</dbReference>
<dbReference type="HAMAP" id="MF_01197">
    <property type="entry name" value="SepF"/>
    <property type="match status" value="1"/>
</dbReference>
<dbReference type="InterPro" id="IPR023052">
    <property type="entry name" value="Cell_div_SepF"/>
</dbReference>
<dbReference type="InterPro" id="IPR007561">
    <property type="entry name" value="Cell_div_SepF/SepF-rel"/>
</dbReference>
<dbReference type="InterPro" id="IPR038594">
    <property type="entry name" value="SepF-like_sf"/>
</dbReference>
<dbReference type="PANTHER" id="PTHR35798">
    <property type="entry name" value="CELL DIVISION PROTEIN SEPF"/>
    <property type="match status" value="1"/>
</dbReference>
<dbReference type="PANTHER" id="PTHR35798:SF1">
    <property type="entry name" value="CELL DIVISION PROTEIN SEPF"/>
    <property type="match status" value="1"/>
</dbReference>
<dbReference type="Pfam" id="PF04472">
    <property type="entry name" value="SepF"/>
    <property type="match status" value="1"/>
</dbReference>